<organismHost>
    <name type="scientific">Acanthamoeba polyphaga</name>
    <name type="common">Amoeba</name>
    <dbReference type="NCBI Taxonomy" id="5757"/>
</organismHost>
<protein>
    <recommendedName>
        <fullName>Uncharacterized protein L591</fullName>
    </recommendedName>
</protein>
<evidence type="ECO:0000256" key="1">
    <source>
        <dbReference type="SAM" id="MobiDB-lite"/>
    </source>
</evidence>
<evidence type="ECO:0000269" key="2">
    <source>
    </source>
</evidence>
<gene>
    <name type="ordered locus">MIMI_L591</name>
</gene>
<reference key="1">
    <citation type="journal article" date="2004" name="Science">
        <title>The 1.2-megabase genome sequence of Mimivirus.</title>
        <authorList>
            <person name="Raoult D."/>
            <person name="Audic S."/>
            <person name="Robert C."/>
            <person name="Abergel C."/>
            <person name="Renesto P."/>
            <person name="Ogata H."/>
            <person name="La Scola B."/>
            <person name="Susan M."/>
            <person name="Claverie J.-M."/>
        </authorList>
    </citation>
    <scope>NUCLEOTIDE SEQUENCE [LARGE SCALE GENOMIC DNA]</scope>
    <source>
        <strain>Rowbotham-Bradford</strain>
    </source>
</reference>
<reference key="2">
    <citation type="journal article" date="2006" name="J. Virol.">
        <title>Mimivirus giant particles incorporate a large fraction of anonymous and unique gene products.</title>
        <authorList>
            <person name="Renesto P."/>
            <person name="Abergel C."/>
            <person name="Decloquement P."/>
            <person name="Moinier D."/>
            <person name="Azza S."/>
            <person name="Ogata H."/>
            <person name="Fourquet P."/>
            <person name="Gorvel J.-P."/>
            <person name="Claverie J.-M."/>
            <person name="Raoult D."/>
        </authorList>
    </citation>
    <scope>IDENTIFICATION BY MASS SPECTROMETRY [LARGE SCALE ANALYSIS]</scope>
    <scope>SUBCELLULAR LOCATION</scope>
</reference>
<proteinExistence type="evidence at protein level"/>
<sequence>MNITNINTTRIPAGTRLYLTKKKYNKFYIQPDKTLVNDNLFVAYDVKIGGVIAIPQGTRVLGNWVAESSPSIAVQLQLTKIFLYGSGQNISADSDLVETLVDYNSDEIDCAPYLYKIHHFKSPAGIYRRIVNTKCRSKILTDNNRNSIYLEVNTKEISVVLNEDIIPMPDLSKMPVPQSPSVPTMPSVNNDQPTQKPNKITRNYKPKHQHNYKPNYQPNYQPNYGQNCSNSHSNDYFSDYPTEHSGDSSSYSTYEDDDF</sequence>
<dbReference type="EMBL" id="AY653733">
    <property type="protein sequence ID" value="AAV50854.1"/>
    <property type="molecule type" value="Genomic_DNA"/>
</dbReference>
<dbReference type="KEGG" id="vg:9925227"/>
<dbReference type="OrthoDB" id="21045at10239"/>
<dbReference type="Proteomes" id="UP000001134">
    <property type="component" value="Genome"/>
</dbReference>
<dbReference type="GO" id="GO:0044423">
    <property type="term" value="C:virion component"/>
    <property type="evidence" value="ECO:0007669"/>
    <property type="project" value="UniProtKB-KW"/>
</dbReference>
<keyword id="KW-1185">Reference proteome</keyword>
<keyword id="KW-0946">Virion</keyword>
<organism>
    <name type="scientific">Acanthamoeba polyphaga mimivirus</name>
    <name type="common">APMV</name>
    <dbReference type="NCBI Taxonomy" id="212035"/>
    <lineage>
        <taxon>Viruses</taxon>
        <taxon>Varidnaviria</taxon>
        <taxon>Bamfordvirae</taxon>
        <taxon>Nucleocytoviricota</taxon>
        <taxon>Megaviricetes</taxon>
        <taxon>Imitervirales</taxon>
        <taxon>Mimiviridae</taxon>
        <taxon>Megamimivirinae</taxon>
        <taxon>Mimivirus</taxon>
        <taxon>Mimivirus bradfordmassiliense</taxon>
    </lineage>
</organism>
<feature type="chain" id="PRO_0000071297" description="Uncharacterized protein L591">
    <location>
        <begin position="1"/>
        <end position="259"/>
    </location>
</feature>
<feature type="region of interest" description="Disordered" evidence="1">
    <location>
        <begin position="171"/>
        <end position="259"/>
    </location>
</feature>
<feature type="compositionally biased region" description="Polar residues" evidence="1">
    <location>
        <begin position="179"/>
        <end position="201"/>
    </location>
</feature>
<feature type="compositionally biased region" description="Basic residues" evidence="1">
    <location>
        <begin position="202"/>
        <end position="211"/>
    </location>
</feature>
<feature type="compositionally biased region" description="Polar residues" evidence="1">
    <location>
        <begin position="212"/>
        <end position="236"/>
    </location>
</feature>
<accession>Q5UP59</accession>
<name>YL591_MIMIV</name>
<comment type="subcellular location">
    <subcellularLocation>
        <location evidence="2">Virion</location>
    </subcellularLocation>
</comment>